<gene>
    <name evidence="1" type="primary">pyrB</name>
    <name type="ordered locus">VSAL_I0519</name>
</gene>
<feature type="chain" id="PRO_1000088734" description="Aspartate carbamoyltransferase catalytic subunit">
    <location>
        <begin position="1"/>
        <end position="309"/>
    </location>
</feature>
<feature type="binding site" evidence="1">
    <location>
        <position position="55"/>
    </location>
    <ligand>
        <name>carbamoyl phosphate</name>
        <dbReference type="ChEBI" id="CHEBI:58228"/>
    </ligand>
</feature>
<feature type="binding site" evidence="1">
    <location>
        <position position="56"/>
    </location>
    <ligand>
        <name>carbamoyl phosphate</name>
        <dbReference type="ChEBI" id="CHEBI:58228"/>
    </ligand>
</feature>
<feature type="binding site" evidence="1">
    <location>
        <position position="85"/>
    </location>
    <ligand>
        <name>L-aspartate</name>
        <dbReference type="ChEBI" id="CHEBI:29991"/>
    </ligand>
</feature>
<feature type="binding site" evidence="1">
    <location>
        <position position="106"/>
    </location>
    <ligand>
        <name>carbamoyl phosphate</name>
        <dbReference type="ChEBI" id="CHEBI:58228"/>
    </ligand>
</feature>
<feature type="binding site" evidence="1">
    <location>
        <position position="135"/>
    </location>
    <ligand>
        <name>carbamoyl phosphate</name>
        <dbReference type="ChEBI" id="CHEBI:58228"/>
    </ligand>
</feature>
<feature type="binding site" evidence="1">
    <location>
        <position position="138"/>
    </location>
    <ligand>
        <name>carbamoyl phosphate</name>
        <dbReference type="ChEBI" id="CHEBI:58228"/>
    </ligand>
</feature>
<feature type="binding site" evidence="1">
    <location>
        <position position="168"/>
    </location>
    <ligand>
        <name>L-aspartate</name>
        <dbReference type="ChEBI" id="CHEBI:29991"/>
    </ligand>
</feature>
<feature type="binding site" evidence="1">
    <location>
        <position position="230"/>
    </location>
    <ligand>
        <name>L-aspartate</name>
        <dbReference type="ChEBI" id="CHEBI:29991"/>
    </ligand>
</feature>
<feature type="binding site" evidence="1">
    <location>
        <position position="268"/>
    </location>
    <ligand>
        <name>carbamoyl phosphate</name>
        <dbReference type="ChEBI" id="CHEBI:58228"/>
    </ligand>
</feature>
<feature type="binding site" evidence="1">
    <location>
        <position position="269"/>
    </location>
    <ligand>
        <name>carbamoyl phosphate</name>
        <dbReference type="ChEBI" id="CHEBI:58228"/>
    </ligand>
</feature>
<proteinExistence type="inferred from homology"/>
<organism>
    <name type="scientific">Aliivibrio salmonicida (strain LFI1238)</name>
    <name type="common">Vibrio salmonicida (strain LFI1238)</name>
    <dbReference type="NCBI Taxonomy" id="316275"/>
    <lineage>
        <taxon>Bacteria</taxon>
        <taxon>Pseudomonadati</taxon>
        <taxon>Pseudomonadota</taxon>
        <taxon>Gammaproteobacteria</taxon>
        <taxon>Vibrionales</taxon>
        <taxon>Vibrionaceae</taxon>
        <taxon>Aliivibrio</taxon>
    </lineage>
</organism>
<evidence type="ECO:0000255" key="1">
    <source>
        <dbReference type="HAMAP-Rule" id="MF_00001"/>
    </source>
</evidence>
<name>PYRB_ALISL</name>
<dbReference type="EC" id="2.1.3.2" evidence="1"/>
<dbReference type="EMBL" id="FM178379">
    <property type="protein sequence ID" value="CAQ78204.1"/>
    <property type="molecule type" value="Genomic_DNA"/>
</dbReference>
<dbReference type="RefSeq" id="WP_012549328.1">
    <property type="nucleotide sequence ID" value="NC_011312.1"/>
</dbReference>
<dbReference type="SMR" id="B6EMS5"/>
<dbReference type="KEGG" id="vsa:VSAL_I0519"/>
<dbReference type="eggNOG" id="COG0540">
    <property type="taxonomic scope" value="Bacteria"/>
</dbReference>
<dbReference type="HOGENOM" id="CLU_043846_1_2_6"/>
<dbReference type="UniPathway" id="UPA00070">
    <property type="reaction ID" value="UER00116"/>
</dbReference>
<dbReference type="Proteomes" id="UP000001730">
    <property type="component" value="Chromosome 1"/>
</dbReference>
<dbReference type="GO" id="GO:0005829">
    <property type="term" value="C:cytosol"/>
    <property type="evidence" value="ECO:0007669"/>
    <property type="project" value="TreeGrafter"/>
</dbReference>
<dbReference type="GO" id="GO:0016597">
    <property type="term" value="F:amino acid binding"/>
    <property type="evidence" value="ECO:0007669"/>
    <property type="project" value="InterPro"/>
</dbReference>
<dbReference type="GO" id="GO:0004070">
    <property type="term" value="F:aspartate carbamoyltransferase activity"/>
    <property type="evidence" value="ECO:0007669"/>
    <property type="project" value="UniProtKB-UniRule"/>
</dbReference>
<dbReference type="GO" id="GO:0006207">
    <property type="term" value="P:'de novo' pyrimidine nucleobase biosynthetic process"/>
    <property type="evidence" value="ECO:0007669"/>
    <property type="project" value="InterPro"/>
</dbReference>
<dbReference type="GO" id="GO:0044205">
    <property type="term" value="P:'de novo' UMP biosynthetic process"/>
    <property type="evidence" value="ECO:0007669"/>
    <property type="project" value="UniProtKB-UniRule"/>
</dbReference>
<dbReference type="GO" id="GO:0006520">
    <property type="term" value="P:amino acid metabolic process"/>
    <property type="evidence" value="ECO:0007669"/>
    <property type="project" value="InterPro"/>
</dbReference>
<dbReference type="FunFam" id="3.40.50.1370:FF:000001">
    <property type="entry name" value="Aspartate carbamoyltransferase"/>
    <property type="match status" value="1"/>
</dbReference>
<dbReference type="FunFam" id="3.40.50.1370:FF:000002">
    <property type="entry name" value="Aspartate carbamoyltransferase 2"/>
    <property type="match status" value="1"/>
</dbReference>
<dbReference type="Gene3D" id="3.40.50.1370">
    <property type="entry name" value="Aspartate/ornithine carbamoyltransferase"/>
    <property type="match status" value="2"/>
</dbReference>
<dbReference type="HAMAP" id="MF_00001">
    <property type="entry name" value="Asp_carb_tr"/>
    <property type="match status" value="1"/>
</dbReference>
<dbReference type="InterPro" id="IPR006132">
    <property type="entry name" value="Asp/Orn_carbamoyltranf_P-bd"/>
</dbReference>
<dbReference type="InterPro" id="IPR006130">
    <property type="entry name" value="Asp/Orn_carbamoylTrfase"/>
</dbReference>
<dbReference type="InterPro" id="IPR036901">
    <property type="entry name" value="Asp/Orn_carbamoylTrfase_sf"/>
</dbReference>
<dbReference type="InterPro" id="IPR002082">
    <property type="entry name" value="Asp_carbamoyltransf"/>
</dbReference>
<dbReference type="InterPro" id="IPR006131">
    <property type="entry name" value="Asp_carbamoyltransf_Asp/Orn-bd"/>
</dbReference>
<dbReference type="NCBIfam" id="TIGR00670">
    <property type="entry name" value="asp_carb_tr"/>
    <property type="match status" value="1"/>
</dbReference>
<dbReference type="NCBIfam" id="NF002032">
    <property type="entry name" value="PRK00856.1"/>
    <property type="match status" value="1"/>
</dbReference>
<dbReference type="PANTHER" id="PTHR45753:SF6">
    <property type="entry name" value="ASPARTATE CARBAMOYLTRANSFERASE"/>
    <property type="match status" value="1"/>
</dbReference>
<dbReference type="PANTHER" id="PTHR45753">
    <property type="entry name" value="ORNITHINE CARBAMOYLTRANSFERASE, MITOCHONDRIAL"/>
    <property type="match status" value="1"/>
</dbReference>
<dbReference type="Pfam" id="PF00185">
    <property type="entry name" value="OTCace"/>
    <property type="match status" value="1"/>
</dbReference>
<dbReference type="Pfam" id="PF02729">
    <property type="entry name" value="OTCace_N"/>
    <property type="match status" value="1"/>
</dbReference>
<dbReference type="PRINTS" id="PR00100">
    <property type="entry name" value="AOTCASE"/>
</dbReference>
<dbReference type="PRINTS" id="PR00101">
    <property type="entry name" value="ATCASE"/>
</dbReference>
<dbReference type="SUPFAM" id="SSF53671">
    <property type="entry name" value="Aspartate/ornithine carbamoyltransferase"/>
    <property type="match status" value="1"/>
</dbReference>
<dbReference type="PROSITE" id="PS00097">
    <property type="entry name" value="CARBAMOYLTRANSFERASE"/>
    <property type="match status" value="1"/>
</dbReference>
<reference key="1">
    <citation type="journal article" date="2008" name="BMC Genomics">
        <title>The genome sequence of the fish pathogen Aliivibrio salmonicida strain LFI1238 shows extensive evidence of gene decay.</title>
        <authorList>
            <person name="Hjerde E."/>
            <person name="Lorentzen M.S."/>
            <person name="Holden M.T."/>
            <person name="Seeger K."/>
            <person name="Paulsen S."/>
            <person name="Bason N."/>
            <person name="Churcher C."/>
            <person name="Harris D."/>
            <person name="Norbertczak H."/>
            <person name="Quail M.A."/>
            <person name="Sanders S."/>
            <person name="Thurston S."/>
            <person name="Parkhill J."/>
            <person name="Willassen N.P."/>
            <person name="Thomson N.R."/>
        </authorList>
    </citation>
    <scope>NUCLEOTIDE SEQUENCE [LARGE SCALE GENOMIC DNA]</scope>
    <source>
        <strain>LFI1238</strain>
    </source>
</reference>
<protein>
    <recommendedName>
        <fullName evidence="1">Aspartate carbamoyltransferase catalytic subunit</fullName>
        <ecNumber evidence="1">2.1.3.2</ecNumber>
    </recommendedName>
    <alternativeName>
        <fullName evidence="1">Aspartate transcarbamylase</fullName>
        <shortName evidence="1">ATCase</shortName>
    </alternativeName>
</protein>
<comment type="function">
    <text evidence="1">Catalyzes the condensation of carbamoyl phosphate and aspartate to form carbamoyl aspartate and inorganic phosphate, the committed step in the de novo pyrimidine nucleotide biosynthesis pathway.</text>
</comment>
<comment type="catalytic activity">
    <reaction evidence="1">
        <text>carbamoyl phosphate + L-aspartate = N-carbamoyl-L-aspartate + phosphate + H(+)</text>
        <dbReference type="Rhea" id="RHEA:20013"/>
        <dbReference type="ChEBI" id="CHEBI:15378"/>
        <dbReference type="ChEBI" id="CHEBI:29991"/>
        <dbReference type="ChEBI" id="CHEBI:32814"/>
        <dbReference type="ChEBI" id="CHEBI:43474"/>
        <dbReference type="ChEBI" id="CHEBI:58228"/>
        <dbReference type="EC" id="2.1.3.2"/>
    </reaction>
</comment>
<comment type="pathway">
    <text evidence="1">Pyrimidine metabolism; UMP biosynthesis via de novo pathway; (S)-dihydroorotate from bicarbonate: step 2/3.</text>
</comment>
<comment type="subunit">
    <text evidence="1">Heterododecamer (2C3:3R2) of six catalytic PyrB chains organized as two trimers (C3), and six regulatory PyrI chains organized as three dimers (R2).</text>
</comment>
<comment type="similarity">
    <text evidence="1">Belongs to the aspartate/ornithine carbamoyltransferase superfamily. ATCase family.</text>
</comment>
<keyword id="KW-0665">Pyrimidine biosynthesis</keyword>
<keyword id="KW-0808">Transferase</keyword>
<sequence length="309" mass="34488">MANSLYQKHIISIPELSREELELIVETAGNIKKEPQPDLLKNKVIASCFFEASTRTRLSFETAIQRLGGSVIGFDSAGNTSLAQKGETLADSVQIIASYANAYVMRHPREGAARLASEFSNGTPVINAGDGANQHPTQTLLDLYTIYETQGRLDNLNIAFVGDLKYGRTVHSLTQALAKFNGVKFFFIAPEVLAMPDYICEELDELGIEYQLLNSMEEAIPELDILYMTRVQKERFDESEYAHIKSAYILSAADLKPARENLKVLHPLPRIDEINIDVDKTPHAYYFQQAENGVYARQALLALVLNESL</sequence>
<accession>B6EMS5</accession>